<name>HEPC1_SALSA</name>
<organism>
    <name type="scientific">Salmo salar</name>
    <name type="common">Atlantic salmon</name>
    <dbReference type="NCBI Taxonomy" id="8030"/>
    <lineage>
        <taxon>Eukaryota</taxon>
        <taxon>Metazoa</taxon>
        <taxon>Chordata</taxon>
        <taxon>Craniata</taxon>
        <taxon>Vertebrata</taxon>
        <taxon>Euteleostomi</taxon>
        <taxon>Actinopterygii</taxon>
        <taxon>Neopterygii</taxon>
        <taxon>Teleostei</taxon>
        <taxon>Protacanthopterygii</taxon>
        <taxon>Salmoniformes</taxon>
        <taxon>Salmonidae</taxon>
        <taxon>Salmoninae</taxon>
        <taxon>Salmo</taxon>
    </lineage>
</organism>
<feature type="signal peptide" evidence="2">
    <location>
        <begin position="1"/>
        <end position="22"/>
    </location>
</feature>
<feature type="propeptide" id="PRO_0000013395" evidence="2">
    <location>
        <begin position="23"/>
        <end position="59"/>
    </location>
</feature>
<feature type="peptide" id="PRO_0000013396" description="Hepcidin-1">
    <location>
        <begin position="62"/>
        <end position="86"/>
    </location>
</feature>
<feature type="disulfide bond" evidence="1">
    <location>
        <begin position="68"/>
        <end position="84"/>
    </location>
</feature>
<feature type="disulfide bond" evidence="1">
    <location>
        <begin position="71"/>
        <end position="74"/>
    </location>
</feature>
<feature type="disulfide bond" evidence="1">
    <location>
        <begin position="72"/>
        <end position="80"/>
    </location>
</feature>
<feature type="disulfide bond" evidence="1">
    <location>
        <begin position="75"/>
        <end position="83"/>
    </location>
</feature>
<proteinExistence type="inferred from homology"/>
<evidence type="ECO:0000250" key="1"/>
<evidence type="ECO:0000255" key="2"/>
<evidence type="ECO:0000305" key="3"/>
<protein>
    <recommendedName>
        <fullName>Hepcidin-1</fullName>
    </recommendedName>
</protein>
<dbReference type="EMBL" id="AF542965">
    <property type="protein sequence ID" value="AAO85553.1"/>
    <property type="molecule type" value="Transcribed_RNA"/>
</dbReference>
<dbReference type="STRING" id="8030.ENSSSAP00000083345"/>
<dbReference type="PaxDb" id="8030-ENSSSAP00000083302"/>
<dbReference type="Ensembl" id="ENSSSAT00070049688">
    <property type="protein sequence ID" value="ENSSSAP00070047681"/>
    <property type="gene ID" value="ENSSSAG00070031010"/>
</dbReference>
<dbReference type="GeneID" id="106584587"/>
<dbReference type="KEGG" id="sasa:106584587"/>
<dbReference type="OrthoDB" id="522438at7898"/>
<dbReference type="Proteomes" id="UP000087266">
    <property type="component" value="Chromosome ssa02"/>
</dbReference>
<dbReference type="Bgee" id="ENSSSAG00000068171">
    <property type="expression patterns" value="Expressed in heart and 27 other cell types or tissues"/>
</dbReference>
<dbReference type="GO" id="GO:0005576">
    <property type="term" value="C:extracellular region"/>
    <property type="evidence" value="ECO:0007669"/>
    <property type="project" value="UniProtKB-SubCell"/>
</dbReference>
<dbReference type="GO" id="GO:0005179">
    <property type="term" value="F:hormone activity"/>
    <property type="evidence" value="ECO:0007669"/>
    <property type="project" value="UniProtKB-KW"/>
</dbReference>
<dbReference type="GO" id="GO:0042742">
    <property type="term" value="P:defense response to bacterium"/>
    <property type="evidence" value="ECO:0007669"/>
    <property type="project" value="UniProtKB-KW"/>
</dbReference>
<dbReference type="GO" id="GO:0006879">
    <property type="term" value="P:intracellular iron ion homeostasis"/>
    <property type="evidence" value="ECO:0007669"/>
    <property type="project" value="InterPro"/>
</dbReference>
<dbReference type="InterPro" id="IPR010500">
    <property type="entry name" value="Hepcidin"/>
</dbReference>
<dbReference type="PANTHER" id="PTHR16877">
    <property type="entry name" value="HEPCIDIN"/>
    <property type="match status" value="1"/>
</dbReference>
<dbReference type="PANTHER" id="PTHR16877:SF0">
    <property type="entry name" value="HEPCIDIN"/>
    <property type="match status" value="1"/>
</dbReference>
<dbReference type="Pfam" id="PF06446">
    <property type="entry name" value="Hepcidin"/>
    <property type="match status" value="1"/>
</dbReference>
<keyword id="KW-0044">Antibiotic</keyword>
<keyword id="KW-0929">Antimicrobial</keyword>
<keyword id="KW-0165">Cleavage on pair of basic residues</keyword>
<keyword id="KW-1015">Disulfide bond</keyword>
<keyword id="KW-0372">Hormone</keyword>
<keyword id="KW-1185">Reference proteome</keyword>
<keyword id="KW-0964">Secreted</keyword>
<keyword id="KW-0732">Signal</keyword>
<sequence>MKAFSVAVVLVIACMFILESTAVPFSEVRTEEVGSFDSPVGEHQQPGGESMHLPEPFRFKRQIHLSLCGLCCNCCHNIGCGFCCKF</sequence>
<gene>
    <name type="primary">hamp1</name>
    <name type="synonym">hep1</name>
</gene>
<comment type="function">
    <text evidence="1">Seems to act as a signaling molecule involved in the maintenance of iron homeostasis. Seems to be required in conjunction with HFE to regulate both intestinal iron absorption and iron storage in macrophages. May also have antimicrobial activity (By similarity).</text>
</comment>
<comment type="subcellular location">
    <subcellularLocation>
        <location>Secreted</location>
    </subcellularLocation>
</comment>
<comment type="similarity">
    <text evidence="3">Belongs to the hepcidin family.</text>
</comment>
<accession>Q801Y3</accession>
<reference key="1">
    <citation type="journal article" date="2003" name="Dev. Comp. Immunol.">
        <title>Identification and expression analysis of hepcidin-like antimicrobial peptides in bony fish.</title>
        <authorList>
            <person name="Douglas S.E."/>
            <person name="Gallant J.W."/>
            <person name="Liebscher R.S."/>
            <person name="Dacanay A."/>
            <person name="Tsoi S.C.M."/>
        </authorList>
    </citation>
    <scope>NUCLEOTIDE SEQUENCE</scope>
</reference>